<evidence type="ECO:0000255" key="1">
    <source>
        <dbReference type="HAMAP-Rule" id="MF_01342"/>
    </source>
</evidence>
<evidence type="ECO:0000305" key="2"/>
<reference key="1">
    <citation type="submission" date="2007-11" db="EMBL/GenBank/DDBJ databases">
        <title>The genome sequence of the hyperthermophilic bacterium Thermotoga neapolitana.</title>
        <authorList>
            <person name="Lim S.K."/>
            <person name="Kim J.S."/>
            <person name="Cha S.H."/>
            <person name="Park B.C."/>
            <person name="Lee D.S."/>
            <person name="Tae H.S."/>
            <person name="Kim S.-J."/>
            <person name="Kim J.J."/>
            <person name="Park K.J."/>
            <person name="Lee S.Y."/>
        </authorList>
    </citation>
    <scope>NUCLEOTIDE SEQUENCE [LARGE SCALE GENOMIC DNA]</scope>
    <source>
        <strain>ATCC 49049 / DSM 4359 / NBRC 107923 / NS-E</strain>
    </source>
</reference>
<sequence length="142" mass="15920">MLMPRRVKYRKQQRGRMKGKAKGGTLVQFGEWGLKALEPAWITAQQIEACRIAMMRVMKRAGKIWIRIFPDKPYTKKPAESRMGKGKGNVEGWVAVVKPGKILFEIAGVDEETAHEALRYAASKLPIATKVVPRHHIGGEAV</sequence>
<name>RL16_THENN</name>
<gene>
    <name evidence="1" type="primary">rplP</name>
    <name type="ordered locus">CTN_1000</name>
</gene>
<keyword id="KW-0687">Ribonucleoprotein</keyword>
<keyword id="KW-0689">Ribosomal protein</keyword>
<keyword id="KW-0694">RNA-binding</keyword>
<keyword id="KW-0699">rRNA-binding</keyword>
<keyword id="KW-0820">tRNA-binding</keyword>
<comment type="function">
    <text evidence="1">Binds 23S rRNA and is also seen to make contacts with the A and possibly P site tRNAs.</text>
</comment>
<comment type="subunit">
    <text evidence="1">Part of the 50S ribosomal subunit.</text>
</comment>
<comment type="similarity">
    <text evidence="1">Belongs to the universal ribosomal protein uL16 family.</text>
</comment>
<proteinExistence type="inferred from homology"/>
<organism>
    <name type="scientific">Thermotoga neapolitana (strain ATCC 49049 / DSM 4359 / NBRC 107923 / NS-E)</name>
    <dbReference type="NCBI Taxonomy" id="309803"/>
    <lineage>
        <taxon>Bacteria</taxon>
        <taxon>Thermotogati</taxon>
        <taxon>Thermotogota</taxon>
        <taxon>Thermotogae</taxon>
        <taxon>Thermotogales</taxon>
        <taxon>Thermotogaceae</taxon>
        <taxon>Thermotoga</taxon>
    </lineage>
</organism>
<feature type="chain" id="PRO_1000166386" description="Large ribosomal subunit protein uL16">
    <location>
        <begin position="1"/>
        <end position="142"/>
    </location>
</feature>
<accession>B9K893</accession>
<dbReference type="EMBL" id="CP000916">
    <property type="protein sequence ID" value="ACM23176.1"/>
    <property type="molecule type" value="Genomic_DNA"/>
</dbReference>
<dbReference type="RefSeq" id="WP_015919493.1">
    <property type="nucleotide sequence ID" value="NC_011978.1"/>
</dbReference>
<dbReference type="SMR" id="B9K893"/>
<dbReference type="STRING" id="309803.CTN_1000"/>
<dbReference type="KEGG" id="tna:CTN_1000"/>
<dbReference type="eggNOG" id="COG0197">
    <property type="taxonomic scope" value="Bacteria"/>
</dbReference>
<dbReference type="HOGENOM" id="CLU_078858_2_1_0"/>
<dbReference type="Proteomes" id="UP000000445">
    <property type="component" value="Chromosome"/>
</dbReference>
<dbReference type="GO" id="GO:0022625">
    <property type="term" value="C:cytosolic large ribosomal subunit"/>
    <property type="evidence" value="ECO:0007669"/>
    <property type="project" value="TreeGrafter"/>
</dbReference>
<dbReference type="GO" id="GO:0019843">
    <property type="term" value="F:rRNA binding"/>
    <property type="evidence" value="ECO:0007669"/>
    <property type="project" value="UniProtKB-UniRule"/>
</dbReference>
<dbReference type="GO" id="GO:0003735">
    <property type="term" value="F:structural constituent of ribosome"/>
    <property type="evidence" value="ECO:0007669"/>
    <property type="project" value="InterPro"/>
</dbReference>
<dbReference type="GO" id="GO:0000049">
    <property type="term" value="F:tRNA binding"/>
    <property type="evidence" value="ECO:0007669"/>
    <property type="project" value="UniProtKB-KW"/>
</dbReference>
<dbReference type="GO" id="GO:0006412">
    <property type="term" value="P:translation"/>
    <property type="evidence" value="ECO:0007669"/>
    <property type="project" value="UniProtKB-UniRule"/>
</dbReference>
<dbReference type="CDD" id="cd01433">
    <property type="entry name" value="Ribosomal_L16_L10e"/>
    <property type="match status" value="1"/>
</dbReference>
<dbReference type="FunFam" id="3.90.1170.10:FF:000001">
    <property type="entry name" value="50S ribosomal protein L16"/>
    <property type="match status" value="1"/>
</dbReference>
<dbReference type="Gene3D" id="3.90.1170.10">
    <property type="entry name" value="Ribosomal protein L10e/L16"/>
    <property type="match status" value="1"/>
</dbReference>
<dbReference type="HAMAP" id="MF_01342">
    <property type="entry name" value="Ribosomal_uL16"/>
    <property type="match status" value="1"/>
</dbReference>
<dbReference type="InterPro" id="IPR047873">
    <property type="entry name" value="Ribosomal_uL16"/>
</dbReference>
<dbReference type="InterPro" id="IPR000114">
    <property type="entry name" value="Ribosomal_uL16_bact-type"/>
</dbReference>
<dbReference type="InterPro" id="IPR020798">
    <property type="entry name" value="Ribosomal_uL16_CS"/>
</dbReference>
<dbReference type="InterPro" id="IPR016180">
    <property type="entry name" value="Ribosomal_uL16_dom"/>
</dbReference>
<dbReference type="InterPro" id="IPR036920">
    <property type="entry name" value="Ribosomal_uL16_sf"/>
</dbReference>
<dbReference type="NCBIfam" id="TIGR01164">
    <property type="entry name" value="rplP_bact"/>
    <property type="match status" value="1"/>
</dbReference>
<dbReference type="PANTHER" id="PTHR12220">
    <property type="entry name" value="50S/60S RIBOSOMAL PROTEIN L16"/>
    <property type="match status" value="1"/>
</dbReference>
<dbReference type="PANTHER" id="PTHR12220:SF13">
    <property type="entry name" value="LARGE RIBOSOMAL SUBUNIT PROTEIN UL16M"/>
    <property type="match status" value="1"/>
</dbReference>
<dbReference type="Pfam" id="PF00252">
    <property type="entry name" value="Ribosomal_L16"/>
    <property type="match status" value="1"/>
</dbReference>
<dbReference type="PRINTS" id="PR00060">
    <property type="entry name" value="RIBOSOMALL16"/>
</dbReference>
<dbReference type="SUPFAM" id="SSF54686">
    <property type="entry name" value="Ribosomal protein L16p/L10e"/>
    <property type="match status" value="1"/>
</dbReference>
<dbReference type="PROSITE" id="PS00586">
    <property type="entry name" value="RIBOSOMAL_L16_1"/>
    <property type="match status" value="1"/>
</dbReference>
<dbReference type="PROSITE" id="PS00701">
    <property type="entry name" value="RIBOSOMAL_L16_2"/>
    <property type="match status" value="1"/>
</dbReference>
<protein>
    <recommendedName>
        <fullName evidence="1">Large ribosomal subunit protein uL16</fullName>
    </recommendedName>
    <alternativeName>
        <fullName evidence="2">50S ribosomal protein L16</fullName>
    </alternativeName>
</protein>